<reference key="1">
    <citation type="journal article" date="1998" name="Gene">
        <title>Identification and genomic organization of a gene coding for a new member of the cell adhesion molecule family mapping to Xq25.</title>
        <authorList>
            <person name="Frattini A."/>
            <person name="Faranda S."/>
            <person name="Redolfi E."/>
            <person name="Allavena P."/>
            <person name="Vezzoni P."/>
        </authorList>
    </citation>
    <scope>NUCLEOTIDE SEQUENCE [MRNA] (ISOFORM 1)</scope>
</reference>
<reference key="2">
    <citation type="journal article" date="1998" name="Genomics">
        <title>Cloning and expression of an immunoglobulin superfamily gene (IGSF1) in Xq25.</title>
        <authorList>
            <person name="Mazzarella R."/>
            <person name="Pengue G."/>
            <person name="Jones J."/>
            <person name="Jones C."/>
            <person name="Schlessinger D."/>
        </authorList>
    </citation>
    <scope>NUCLEOTIDE SEQUENCE [MRNA] (ISOFORM 2)</scope>
    <scope>TISSUE SPECIFICITY</scope>
</reference>
<reference key="3">
    <citation type="journal article" date="2002" name="J. Mol. Endocrinol.">
        <title>Expression profile of active genes in the human pituitary gland.</title>
        <authorList>
            <person name="Tanaka S."/>
            <person name="Tatsumi K."/>
            <person name="Okubo K."/>
            <person name="Itoh K."/>
            <person name="Kawamoto S."/>
            <person name="Matsubara K."/>
            <person name="Amino N."/>
        </authorList>
    </citation>
    <scope>NUCLEOTIDE SEQUENCE [MRNA] (ISOFORM 3)</scope>
    <scope>TISSUE SPECIFICITY</scope>
    <source>
        <tissue>Pituitary</tissue>
    </source>
</reference>
<reference key="4">
    <citation type="journal article" date="1997" name="DNA Res.">
        <title>Prediction of the coding sequences of unidentified human genes. VII. The complete sequences of 100 new cDNA clones from brain which can code for large proteins in vitro.</title>
        <authorList>
            <person name="Nagase T."/>
            <person name="Ishikawa K."/>
            <person name="Nakajima D."/>
            <person name="Ohira M."/>
            <person name="Seki N."/>
            <person name="Miyajima N."/>
            <person name="Tanaka A."/>
            <person name="Kotani H."/>
            <person name="Nomura N."/>
            <person name="Ohara O."/>
        </authorList>
    </citation>
    <scope>NUCLEOTIDE SEQUENCE [LARGE SCALE MRNA] (ISOFORM 2)</scope>
    <source>
        <tissue>Brain</tissue>
    </source>
</reference>
<reference key="5">
    <citation type="submission" date="2006-07" db="EMBL/GenBank/DDBJ databases">
        <authorList>
            <person name="Totoki Y."/>
            <person name="Toyoda A."/>
            <person name="Takeda T."/>
            <person name="Sakaki Y."/>
            <person name="Tanaka A."/>
            <person name="Yokoyama S."/>
        </authorList>
    </citation>
    <scope>NUCLEOTIDE SEQUENCE [LARGE SCALE MRNA] (ISOFORM 4)</scope>
    <source>
        <tissue>Liver</tissue>
    </source>
</reference>
<reference key="6">
    <citation type="journal article" date="2005" name="Nature">
        <title>The DNA sequence of the human X chromosome.</title>
        <authorList>
            <person name="Ross M.T."/>
            <person name="Grafham D.V."/>
            <person name="Coffey A.J."/>
            <person name="Scherer S."/>
            <person name="McLay K."/>
            <person name="Muzny D."/>
            <person name="Platzer M."/>
            <person name="Howell G.R."/>
            <person name="Burrows C."/>
            <person name="Bird C.P."/>
            <person name="Frankish A."/>
            <person name="Lovell F.L."/>
            <person name="Howe K.L."/>
            <person name="Ashurst J.L."/>
            <person name="Fulton R.S."/>
            <person name="Sudbrak R."/>
            <person name="Wen G."/>
            <person name="Jones M.C."/>
            <person name="Hurles M.E."/>
            <person name="Andrews T.D."/>
            <person name="Scott C.E."/>
            <person name="Searle S."/>
            <person name="Ramser J."/>
            <person name="Whittaker A."/>
            <person name="Deadman R."/>
            <person name="Carter N.P."/>
            <person name="Hunt S.E."/>
            <person name="Chen R."/>
            <person name="Cree A."/>
            <person name="Gunaratne P."/>
            <person name="Havlak P."/>
            <person name="Hodgson A."/>
            <person name="Metzker M.L."/>
            <person name="Richards S."/>
            <person name="Scott G."/>
            <person name="Steffen D."/>
            <person name="Sodergren E."/>
            <person name="Wheeler D.A."/>
            <person name="Worley K.C."/>
            <person name="Ainscough R."/>
            <person name="Ambrose K.D."/>
            <person name="Ansari-Lari M.A."/>
            <person name="Aradhya S."/>
            <person name="Ashwell R.I."/>
            <person name="Babbage A.K."/>
            <person name="Bagguley C.L."/>
            <person name="Ballabio A."/>
            <person name="Banerjee R."/>
            <person name="Barker G.E."/>
            <person name="Barlow K.F."/>
            <person name="Barrett I.P."/>
            <person name="Bates K.N."/>
            <person name="Beare D.M."/>
            <person name="Beasley H."/>
            <person name="Beasley O."/>
            <person name="Beck A."/>
            <person name="Bethel G."/>
            <person name="Blechschmidt K."/>
            <person name="Brady N."/>
            <person name="Bray-Allen S."/>
            <person name="Bridgeman A.M."/>
            <person name="Brown A.J."/>
            <person name="Brown M.J."/>
            <person name="Bonnin D."/>
            <person name="Bruford E.A."/>
            <person name="Buhay C."/>
            <person name="Burch P."/>
            <person name="Burford D."/>
            <person name="Burgess J."/>
            <person name="Burrill W."/>
            <person name="Burton J."/>
            <person name="Bye J.M."/>
            <person name="Carder C."/>
            <person name="Carrel L."/>
            <person name="Chako J."/>
            <person name="Chapman J.C."/>
            <person name="Chavez D."/>
            <person name="Chen E."/>
            <person name="Chen G."/>
            <person name="Chen Y."/>
            <person name="Chen Z."/>
            <person name="Chinault C."/>
            <person name="Ciccodicola A."/>
            <person name="Clark S.Y."/>
            <person name="Clarke G."/>
            <person name="Clee C.M."/>
            <person name="Clegg S."/>
            <person name="Clerc-Blankenburg K."/>
            <person name="Clifford K."/>
            <person name="Cobley V."/>
            <person name="Cole C.G."/>
            <person name="Conquer J.S."/>
            <person name="Corby N."/>
            <person name="Connor R.E."/>
            <person name="David R."/>
            <person name="Davies J."/>
            <person name="Davis C."/>
            <person name="Davis J."/>
            <person name="Delgado O."/>
            <person name="Deshazo D."/>
            <person name="Dhami P."/>
            <person name="Ding Y."/>
            <person name="Dinh H."/>
            <person name="Dodsworth S."/>
            <person name="Draper H."/>
            <person name="Dugan-Rocha S."/>
            <person name="Dunham A."/>
            <person name="Dunn M."/>
            <person name="Durbin K.J."/>
            <person name="Dutta I."/>
            <person name="Eades T."/>
            <person name="Ellwood M."/>
            <person name="Emery-Cohen A."/>
            <person name="Errington H."/>
            <person name="Evans K.L."/>
            <person name="Faulkner L."/>
            <person name="Francis F."/>
            <person name="Frankland J."/>
            <person name="Fraser A.E."/>
            <person name="Galgoczy P."/>
            <person name="Gilbert J."/>
            <person name="Gill R."/>
            <person name="Gloeckner G."/>
            <person name="Gregory S.G."/>
            <person name="Gribble S."/>
            <person name="Griffiths C."/>
            <person name="Grocock R."/>
            <person name="Gu Y."/>
            <person name="Gwilliam R."/>
            <person name="Hamilton C."/>
            <person name="Hart E.A."/>
            <person name="Hawes A."/>
            <person name="Heath P.D."/>
            <person name="Heitmann K."/>
            <person name="Hennig S."/>
            <person name="Hernandez J."/>
            <person name="Hinzmann B."/>
            <person name="Ho S."/>
            <person name="Hoffs M."/>
            <person name="Howden P.J."/>
            <person name="Huckle E.J."/>
            <person name="Hume J."/>
            <person name="Hunt P.J."/>
            <person name="Hunt A.R."/>
            <person name="Isherwood J."/>
            <person name="Jacob L."/>
            <person name="Johnson D."/>
            <person name="Jones S."/>
            <person name="de Jong P.J."/>
            <person name="Joseph S.S."/>
            <person name="Keenan S."/>
            <person name="Kelly S."/>
            <person name="Kershaw J.K."/>
            <person name="Khan Z."/>
            <person name="Kioschis P."/>
            <person name="Klages S."/>
            <person name="Knights A.J."/>
            <person name="Kosiura A."/>
            <person name="Kovar-Smith C."/>
            <person name="Laird G.K."/>
            <person name="Langford C."/>
            <person name="Lawlor S."/>
            <person name="Leversha M."/>
            <person name="Lewis L."/>
            <person name="Liu W."/>
            <person name="Lloyd C."/>
            <person name="Lloyd D.M."/>
            <person name="Loulseged H."/>
            <person name="Loveland J.E."/>
            <person name="Lovell J.D."/>
            <person name="Lozado R."/>
            <person name="Lu J."/>
            <person name="Lyne R."/>
            <person name="Ma J."/>
            <person name="Maheshwari M."/>
            <person name="Matthews L.H."/>
            <person name="McDowall J."/>
            <person name="McLaren S."/>
            <person name="McMurray A."/>
            <person name="Meidl P."/>
            <person name="Meitinger T."/>
            <person name="Milne S."/>
            <person name="Miner G."/>
            <person name="Mistry S.L."/>
            <person name="Morgan M."/>
            <person name="Morris S."/>
            <person name="Mueller I."/>
            <person name="Mullikin J.C."/>
            <person name="Nguyen N."/>
            <person name="Nordsiek G."/>
            <person name="Nyakatura G."/>
            <person name="O'dell C.N."/>
            <person name="Okwuonu G."/>
            <person name="Palmer S."/>
            <person name="Pandian R."/>
            <person name="Parker D."/>
            <person name="Parrish J."/>
            <person name="Pasternak S."/>
            <person name="Patel D."/>
            <person name="Pearce A.V."/>
            <person name="Pearson D.M."/>
            <person name="Pelan S.E."/>
            <person name="Perez L."/>
            <person name="Porter K.M."/>
            <person name="Ramsey Y."/>
            <person name="Reichwald K."/>
            <person name="Rhodes S."/>
            <person name="Ridler K.A."/>
            <person name="Schlessinger D."/>
            <person name="Schueler M.G."/>
            <person name="Sehra H.K."/>
            <person name="Shaw-Smith C."/>
            <person name="Shen H."/>
            <person name="Sheridan E.M."/>
            <person name="Shownkeen R."/>
            <person name="Skuce C.D."/>
            <person name="Smith M.L."/>
            <person name="Sotheran E.C."/>
            <person name="Steingruber H.E."/>
            <person name="Steward C.A."/>
            <person name="Storey R."/>
            <person name="Swann R.M."/>
            <person name="Swarbreck D."/>
            <person name="Tabor P.E."/>
            <person name="Taudien S."/>
            <person name="Taylor T."/>
            <person name="Teague B."/>
            <person name="Thomas K."/>
            <person name="Thorpe A."/>
            <person name="Timms K."/>
            <person name="Tracey A."/>
            <person name="Trevanion S."/>
            <person name="Tromans A.C."/>
            <person name="d'Urso M."/>
            <person name="Verduzco D."/>
            <person name="Villasana D."/>
            <person name="Waldron L."/>
            <person name="Wall M."/>
            <person name="Wang Q."/>
            <person name="Warren J."/>
            <person name="Warry G.L."/>
            <person name="Wei X."/>
            <person name="West A."/>
            <person name="Whitehead S.L."/>
            <person name="Whiteley M.N."/>
            <person name="Wilkinson J.E."/>
            <person name="Willey D.L."/>
            <person name="Williams G."/>
            <person name="Williams L."/>
            <person name="Williamson A."/>
            <person name="Williamson H."/>
            <person name="Wilming L."/>
            <person name="Woodmansey R.L."/>
            <person name="Wray P.W."/>
            <person name="Yen J."/>
            <person name="Zhang J."/>
            <person name="Zhou J."/>
            <person name="Zoghbi H."/>
            <person name="Zorilla S."/>
            <person name="Buck D."/>
            <person name="Reinhardt R."/>
            <person name="Poustka A."/>
            <person name="Rosenthal A."/>
            <person name="Lehrach H."/>
            <person name="Meindl A."/>
            <person name="Minx P.J."/>
            <person name="Hillier L.W."/>
            <person name="Willard H.F."/>
            <person name="Wilson R.K."/>
            <person name="Waterston R.H."/>
            <person name="Rice C.M."/>
            <person name="Vaudin M."/>
            <person name="Coulson A."/>
            <person name="Nelson D.L."/>
            <person name="Weinstock G."/>
            <person name="Sulston J.E."/>
            <person name="Durbin R.M."/>
            <person name="Hubbard T."/>
            <person name="Gibbs R.A."/>
            <person name="Beck S."/>
            <person name="Rogers J."/>
            <person name="Bentley D.R."/>
        </authorList>
    </citation>
    <scope>NUCLEOTIDE SEQUENCE [LARGE SCALE GENOMIC DNA]</scope>
</reference>
<reference key="7">
    <citation type="journal article" date="2007" name="BMC Genomics">
        <title>The full-ORF clone resource of the German cDNA consortium.</title>
        <authorList>
            <person name="Bechtel S."/>
            <person name="Rosenfelder H."/>
            <person name="Duda A."/>
            <person name="Schmidt C.P."/>
            <person name="Ernst U."/>
            <person name="Wellenreuther R."/>
            <person name="Mehrle A."/>
            <person name="Schuster C."/>
            <person name="Bahr A."/>
            <person name="Bloecker H."/>
            <person name="Heubner D."/>
            <person name="Hoerlein A."/>
            <person name="Michel G."/>
            <person name="Wedler H."/>
            <person name="Koehrer K."/>
            <person name="Ottenwaelder B."/>
            <person name="Poustka A."/>
            <person name="Wiemann S."/>
            <person name="Schupp I."/>
        </authorList>
    </citation>
    <scope>NUCLEOTIDE SEQUENCE [LARGE SCALE MRNA] OF 1153-1336</scope>
    <source>
        <tissue>Testis</tissue>
    </source>
</reference>
<reference key="8">
    <citation type="journal article" date="2001" name="Mol. Endocrinol.">
        <title>Modulation of activin signal transduction by inhibin B and inhibin-binding protein (INhBP).</title>
        <authorList>
            <person name="Chapman S.C."/>
            <person name="Woodruff T.K."/>
        </authorList>
    </citation>
    <scope>FUNCTION</scope>
    <scope>INTERACTION WITH ACVR1B; ACVR2A; ACVR2B; ACVRL1 AND BMPR1B</scope>
</reference>
<reference key="9">
    <citation type="journal article" date="2002" name="Genome Res.">
        <title>Protein-protein interactions between large proteins: two-hybrid screening using a functionally classified library composed of long cDNAs.</title>
        <authorList>
            <person name="Nakayama M."/>
            <person name="Kikuno R."/>
            <person name="Ohara O."/>
        </authorList>
    </citation>
    <scope>INTERACTION WITH HECTD1</scope>
</reference>
<reference key="10">
    <citation type="journal article" date="2002" name="Mol. Cell. Endocrinol.">
        <title>Properties of inhibin binding to betaglycan, InhBP/p120 and the activin type II receptors.</title>
        <authorList>
            <person name="Chapman S.C."/>
            <person name="Bernard D.J."/>
            <person name="Jelen J."/>
            <person name="Woodruff T.K."/>
        </authorList>
    </citation>
    <scope>NEGATIVE INTERACTION WITH INHA</scope>
</reference>
<reference key="11">
    <citation type="journal article" date="2011" name="BMC Syst. Biol.">
        <title>Initial characterization of the human central proteome.</title>
        <authorList>
            <person name="Burkard T.R."/>
            <person name="Planyavsky M."/>
            <person name="Kaupe I."/>
            <person name="Breitwieser F.P."/>
            <person name="Buerckstuemmer T."/>
            <person name="Bennett K.L."/>
            <person name="Superti-Furga G."/>
            <person name="Colinge J."/>
        </authorList>
    </citation>
    <scope>IDENTIFICATION BY MASS SPECTROMETRY [LARGE SCALE ANALYSIS]</scope>
</reference>
<reference key="12">
    <citation type="journal article" date="2012" name="Nat. Genet.">
        <title>Loss-of-function mutations in IGSF1 cause an X-linked syndrome of central hypothyroidism and testicular enlargement.</title>
        <authorList>
            <person name="Sun Y."/>
            <person name="Bak B."/>
            <person name="Schoenmakers N."/>
            <person name="van Trotsenburg A.S."/>
            <person name="Oostdijk W."/>
            <person name="Voshol P."/>
            <person name="Cambridge E."/>
            <person name="White J.K."/>
            <person name="le Tissier P."/>
            <person name="Gharavy S.N."/>
            <person name="Martinez-Barbera J.P."/>
            <person name="Stokvis-Brantsma W.H."/>
            <person name="Vulsma T."/>
            <person name="Kempers M.J."/>
            <person name="Persani L."/>
            <person name="Campi I."/>
            <person name="Bonomi M."/>
            <person name="Beck-Peccoz P."/>
            <person name="Zhu H."/>
            <person name="Davis T.M."/>
            <person name="Hokken-Koelega A.C."/>
            <person name="Del Blanco D.G."/>
            <person name="Rangasami J.J."/>
            <person name="Ruivenkamp C.A."/>
            <person name="Laros J.F."/>
            <person name="Kriek M."/>
            <person name="Kant S.G."/>
            <person name="Bosch C.A."/>
            <person name="Biermasz N.R."/>
            <person name="Appelman-Dijkstra N.M."/>
            <person name="Corssmit E.P."/>
            <person name="Hovens G.C."/>
            <person name="Pereira A.M."/>
            <person name="den Dunnen J.T."/>
            <person name="Wade M.G."/>
            <person name="Breuning M.H."/>
            <person name="Hennekam R.C."/>
            <person name="Chatterjee K."/>
            <person name="Dattani M.T."/>
            <person name="Wit J.M."/>
            <person name="Bernard D.J."/>
        </authorList>
    </citation>
    <scope>DEVELOPMENTAL STAGE</scope>
    <scope>TISSUE SPECIFICITY</scope>
    <scope>VARIANTS CHTE 708-ALA--LYS-716 DEL; ASN-765; PHE-858 AND ARG-942</scope>
    <scope>CHARACTERIZATION OF 708-ALA--LYS-716 DEL; ASN-765; PHE-858 AND ARG-942</scope>
</reference>
<reference key="13">
    <citation type="journal article" date="2012" name="Transl. Psychiatry">
        <title>Analysis of the chromosome X exome in patients with autism spectrum disorders identified novel candidate genes, including TMLHE.</title>
        <authorList>
            <person name="Nava C."/>
            <person name="Lamari F."/>
            <person name="Heron D."/>
            <person name="Mignot C."/>
            <person name="Rastetter A."/>
            <person name="Keren B."/>
            <person name="Cohen D."/>
            <person name="Faudet A."/>
            <person name="Bouteiller D."/>
            <person name="Gilleron M."/>
            <person name="Jacquette A."/>
            <person name="Whalen S."/>
            <person name="Afenjar A."/>
            <person name="Perisse D."/>
            <person name="Laurent C."/>
            <person name="Dupuits C."/>
            <person name="Gautier C."/>
            <person name="Gerard M."/>
            <person name="Huguet G."/>
            <person name="Caillet S."/>
            <person name="Leheup B."/>
            <person name="Leboyer M."/>
            <person name="Gillberg C."/>
            <person name="Delorme R."/>
            <person name="Bourgeron T."/>
            <person name="Brice A."/>
            <person name="Depienne C."/>
        </authorList>
    </citation>
    <scope>VARIANT GLY-774</scope>
</reference>
<sequence>MTLDRPGEGATMLKTFTVLLFCIRMSLGMTSIVMDPQPELWIESNYPQAPWENITLWCRSPSRISSKFLLLKDKTQMTWIRPSHKTFQVSFLIGALTESNAGLYRCCYWKETGWSKPSKVLELEAPGQLPKPIFWIQAETPALPGCNVNILCHGWLQDLVFMLFKEGYAEPVDYQVPTGTMAIFSIDNLTPEDEGVYICRTHIQMLPTLWSEPSNPLKLVVAGLYPKPTLTAHPGPIMAPGESLNLRCQGPIYGMTFALMRVEDLEKSFYHKKTIKNEANFFFQSLKIQDTGHYLCFYYDASYRGSLLSDVLKIWVTDTFPKTWLLARPSAVVQMGQNVSLRCRGPVDGVGLALYKKGEDKPLQFLDATSIDDNTSFFLNNVTYSDTGIYSCHYLLTWKTSIRMPSHNTVELMVVDKPPKPSLSAWPSTVFKLGKAITLQCRVSHPVLEFSLEWEERETFQKFSVNGDFIISNVDGKGTGTYSCSYRVETHPNIWSHRSEPLKLMGPAGYLTWNYVLNEAIRLSLIMQLVALLLVVLWIRWKCRRLRIREAWLLGTAQGVTMLFIVTALLCCGLCNGVLIEETEIVMPTPKPELWAETNFPLAPWKNLTLWCRSPSGSTKEFVLLKDGTGWIATRPASEQVRAAFPLGALTQSHTGSYHCHSWEEMAVSEPSEALELVGTDILPKPVISASPTIRGQELQLRCKGWLAGMGFALYKEGEQEPVQQLGAVGREAFFTIQRMEDKDEGNYSCRTHTEKRPFKWSEPSEPLELVIKEMYPKPFFKTWASPVVTPGARVTFNCSTPHQHMSFILYKDGSEIASSDRSWASPGASAAHFLIISVGIGDGGNYSCRYYDFSIWSEPSDPVELVVTEFYPKPTLLAQPGPVVFPGKSVILRCQGTFQGMRFALLQEGAHVPLQFRSVSGNSADFLLHTVGAEDSGNYSCIYYETTMSNRGSYLSMPLMIWVTDTFPKPWLFAEPSSVVPMGQNVTLWCRGPVHGVGYILHKEGEATSMQLWGSTSNDGAFPITNISGTSMGRYSCCYHPDWTSSIKIQPSNTLELLVTGLLPKPSLLAQPGPMVAPGENMTLQCQGELPDSTFVLLKEGAQEPLEQQRPSGYRADFWMPAVRGEDSGIYSCVYYLDSTPFAASNHSDSLEIWVTDKPPKPSLSAWPSTMFKLGKDITLQCRGPLPGVEFVLEHDGEEAPQQFSEDGDFVINNVEGKGIGNYSCSYRLQAYPDIWSEPSDPLELVGAAGPVAQECTVGNIVRSSLIVVVVVALGVVLAIEWKKWPRLRTRGSETDGRDQTIALEECNQEGEPGTPANSPSSTSQRISVELPVPI</sequence>
<gene>
    <name type="primary">IGSF1</name>
    <name type="synonym">IGDC1</name>
    <name type="synonym">KIAA0364</name>
    <name type="synonym">PGSF2</name>
</gene>
<evidence type="ECO:0000250" key="1"/>
<evidence type="ECO:0000255" key="2"/>
<evidence type="ECO:0000255" key="3">
    <source>
        <dbReference type="PROSITE-ProRule" id="PRU00114"/>
    </source>
</evidence>
<evidence type="ECO:0000256" key="4">
    <source>
        <dbReference type="SAM" id="MobiDB-lite"/>
    </source>
</evidence>
<evidence type="ECO:0000269" key="5">
    <source>
    </source>
</evidence>
<evidence type="ECO:0000269" key="6">
    <source>
    </source>
</evidence>
<evidence type="ECO:0000269" key="7">
    <source>
    </source>
</evidence>
<evidence type="ECO:0000269" key="8">
    <source>
    </source>
</evidence>
<evidence type="ECO:0000269" key="9">
    <source>
    </source>
</evidence>
<evidence type="ECO:0000269" key="10">
    <source>
    </source>
</evidence>
<evidence type="ECO:0000303" key="11">
    <source>
    </source>
</evidence>
<evidence type="ECO:0000303" key="12">
    <source>
    </source>
</evidence>
<evidence type="ECO:0000303" key="13">
    <source>
    </source>
</evidence>
<evidence type="ECO:0000303" key="14">
    <source ref="5"/>
</evidence>
<evidence type="ECO:0000305" key="15"/>
<proteinExistence type="evidence at protein level"/>
<dbReference type="EMBL" id="Y10523">
    <property type="protein sequence ID" value="CAA71535.1"/>
    <property type="molecule type" value="mRNA"/>
</dbReference>
<dbReference type="EMBL" id="AF034198">
    <property type="protein sequence ID" value="AAC52057.1"/>
    <property type="molecule type" value="mRNA"/>
</dbReference>
<dbReference type="EMBL" id="AB058894">
    <property type="protein sequence ID" value="BAB40235.1"/>
    <property type="molecule type" value="mRNA"/>
</dbReference>
<dbReference type="EMBL" id="AB002362">
    <property type="protein sequence ID" value="BAA20819.2"/>
    <property type="molecule type" value="mRNA"/>
</dbReference>
<dbReference type="EMBL" id="AK226008">
    <property type="status" value="NOT_ANNOTATED_CDS"/>
    <property type="molecule type" value="mRNA"/>
</dbReference>
<dbReference type="EMBL" id="AL135784">
    <property type="status" value="NOT_ANNOTATED_CDS"/>
    <property type="molecule type" value="Genomic_DNA"/>
</dbReference>
<dbReference type="EMBL" id="AL590806">
    <property type="status" value="NOT_ANNOTATED_CDS"/>
    <property type="molecule type" value="Genomic_DNA"/>
</dbReference>
<dbReference type="EMBL" id="AL137369">
    <property type="protein sequence ID" value="CAB70713.1"/>
    <property type="molecule type" value="mRNA"/>
</dbReference>
<dbReference type="CCDS" id="CCDS14629.1">
    <molecule id="Q8N6C5-1"/>
</dbReference>
<dbReference type="CCDS" id="CCDS14630.1">
    <molecule id="Q8N6C5-3"/>
</dbReference>
<dbReference type="CCDS" id="CCDS55490.1">
    <molecule id="Q8N6C5-2"/>
</dbReference>
<dbReference type="CCDS" id="CCDS55491.1">
    <molecule id="Q8N6C5-4"/>
</dbReference>
<dbReference type="RefSeq" id="NP_001164432.1">
    <molecule id="Q8N6C5-4"/>
    <property type="nucleotide sequence ID" value="NM_001170961.2"/>
</dbReference>
<dbReference type="RefSeq" id="NP_001164433.1">
    <molecule id="Q8N6C5-2"/>
    <property type="nucleotide sequence ID" value="NM_001170962.2"/>
</dbReference>
<dbReference type="RefSeq" id="NP_001164434.1">
    <molecule id="Q8N6C5-3"/>
    <property type="nucleotide sequence ID" value="NM_001170963.2"/>
</dbReference>
<dbReference type="RefSeq" id="NP_001546.2">
    <molecule id="Q8N6C5-1"/>
    <property type="nucleotide sequence ID" value="NM_001555.4"/>
</dbReference>
<dbReference type="RefSeq" id="NP_991402.1">
    <molecule id="Q8N6C5-3"/>
    <property type="nucleotide sequence ID" value="NM_205833.4"/>
</dbReference>
<dbReference type="RefSeq" id="XP_011529632.1">
    <molecule id="Q8N6C5-4"/>
    <property type="nucleotide sequence ID" value="XM_011531330.2"/>
</dbReference>
<dbReference type="RefSeq" id="XP_047298041.1">
    <molecule id="Q8N6C5-4"/>
    <property type="nucleotide sequence ID" value="XM_047442085.1"/>
</dbReference>
<dbReference type="RefSeq" id="XP_047298042.1">
    <molecule id="Q8N6C5-1"/>
    <property type="nucleotide sequence ID" value="XM_047442086.1"/>
</dbReference>
<dbReference type="RefSeq" id="XP_047298043.1">
    <molecule id="Q8N6C5-1"/>
    <property type="nucleotide sequence ID" value="XM_047442087.1"/>
</dbReference>
<dbReference type="RefSeq" id="XP_054182980.1">
    <molecule id="Q8N6C5-4"/>
    <property type="nucleotide sequence ID" value="XM_054327005.1"/>
</dbReference>
<dbReference type="RefSeq" id="XP_054182981.1">
    <molecule id="Q8N6C5-4"/>
    <property type="nucleotide sequence ID" value="XM_054327006.1"/>
</dbReference>
<dbReference type="RefSeq" id="XP_054182982.1">
    <molecule id="Q8N6C5-1"/>
    <property type="nucleotide sequence ID" value="XM_054327007.1"/>
</dbReference>
<dbReference type="RefSeq" id="XP_054182983.1">
    <molecule id="Q8N6C5-1"/>
    <property type="nucleotide sequence ID" value="XM_054327008.1"/>
</dbReference>
<dbReference type="SMR" id="Q8N6C5"/>
<dbReference type="BioGRID" id="109763">
    <property type="interactions" value="16"/>
</dbReference>
<dbReference type="FunCoup" id="Q8N6C5">
    <property type="interactions" value="140"/>
</dbReference>
<dbReference type="IntAct" id="Q8N6C5">
    <property type="interactions" value="7"/>
</dbReference>
<dbReference type="MINT" id="Q8N6C5"/>
<dbReference type="STRING" id="9606.ENSP00000359940"/>
<dbReference type="GlyCosmos" id="Q8N6C5">
    <property type="glycosylation" value="14 sites, No reported glycans"/>
</dbReference>
<dbReference type="GlyGen" id="Q8N6C5">
    <property type="glycosylation" value="17 sites, 3 N-linked glycans (1 site), 1 O-linked glycan (1 site)"/>
</dbReference>
<dbReference type="iPTMnet" id="Q8N6C5"/>
<dbReference type="PhosphoSitePlus" id="Q8N6C5"/>
<dbReference type="SwissPalm" id="Q8N6C5"/>
<dbReference type="BioMuta" id="IGSF1"/>
<dbReference type="DMDM" id="226694182"/>
<dbReference type="jPOST" id="Q8N6C5"/>
<dbReference type="MassIVE" id="Q8N6C5"/>
<dbReference type="PaxDb" id="9606-ENSP00000359940"/>
<dbReference type="PeptideAtlas" id="Q8N6C5"/>
<dbReference type="ProteomicsDB" id="46220"/>
<dbReference type="ProteomicsDB" id="72153">
    <molecule id="Q8N6C5-1"/>
</dbReference>
<dbReference type="ProteomicsDB" id="72154">
    <molecule id="Q8N6C5-2"/>
</dbReference>
<dbReference type="Antibodypedia" id="16308">
    <property type="antibodies" value="186 antibodies from 19 providers"/>
</dbReference>
<dbReference type="DNASU" id="3547"/>
<dbReference type="Ensembl" id="ENST00000361420.8">
    <molecule id="Q8N6C5-1"/>
    <property type="protein sequence ID" value="ENSP00000355010.3"/>
    <property type="gene ID" value="ENSG00000147255.19"/>
</dbReference>
<dbReference type="Ensembl" id="ENST00000370900.5">
    <molecule id="Q8N6C5-3"/>
    <property type="protein sequence ID" value="ENSP00000359937.1"/>
    <property type="gene ID" value="ENSG00000147255.19"/>
</dbReference>
<dbReference type="Ensembl" id="ENST00000370901.4">
    <molecule id="Q8N6C5-3"/>
    <property type="protein sequence ID" value="ENSP00000359938.4"/>
    <property type="gene ID" value="ENSG00000147255.19"/>
</dbReference>
<dbReference type="Ensembl" id="ENST00000370903.8">
    <molecule id="Q8N6C5-4"/>
    <property type="protein sequence ID" value="ENSP00000359940.3"/>
    <property type="gene ID" value="ENSG00000147255.19"/>
</dbReference>
<dbReference type="Ensembl" id="ENST00000370904.6">
    <molecule id="Q8N6C5-2"/>
    <property type="protein sequence ID" value="ENSP00000359941.1"/>
    <property type="gene ID" value="ENSG00000147255.19"/>
</dbReference>
<dbReference type="Ensembl" id="ENST00000370910.5">
    <molecule id="Q8N6C5-2"/>
    <property type="protein sequence ID" value="ENSP00000359947.1"/>
    <property type="gene ID" value="ENSG00000147255.19"/>
</dbReference>
<dbReference type="Ensembl" id="ENST00000651556.1">
    <molecule id="Q8N6C5-1"/>
    <property type="protein sequence ID" value="ENSP00000498789.1"/>
    <property type="gene ID" value="ENSG00000147255.19"/>
</dbReference>
<dbReference type="GeneID" id="3547"/>
<dbReference type="KEGG" id="hsa:3547"/>
<dbReference type="MANE-Select" id="ENST00000361420.8">
    <property type="protein sequence ID" value="ENSP00000355010.3"/>
    <property type="RefSeq nucleotide sequence ID" value="NM_001555.5"/>
    <property type="RefSeq protein sequence ID" value="NP_001546.2"/>
</dbReference>
<dbReference type="UCSC" id="uc004ewd.5">
    <molecule id="Q8N6C5-1"/>
    <property type="organism name" value="human"/>
</dbReference>
<dbReference type="AGR" id="HGNC:5948"/>
<dbReference type="CTD" id="3547"/>
<dbReference type="DisGeNET" id="3547"/>
<dbReference type="GeneCards" id="IGSF1"/>
<dbReference type="HGNC" id="HGNC:5948">
    <property type="gene designation" value="IGSF1"/>
</dbReference>
<dbReference type="HPA" id="ENSG00000147255">
    <property type="expression patterns" value="Tissue enriched (pituitary)"/>
</dbReference>
<dbReference type="MalaCards" id="IGSF1"/>
<dbReference type="MIM" id="300137">
    <property type="type" value="gene"/>
</dbReference>
<dbReference type="MIM" id="300888">
    <property type="type" value="phenotype"/>
</dbReference>
<dbReference type="neXtProt" id="NX_Q8N6C5"/>
<dbReference type="OpenTargets" id="ENSG00000147255"/>
<dbReference type="Orphanet" id="329235">
    <property type="disease" value="X-linked central congenital hypothyroidism with late-onset testicular enlargement"/>
</dbReference>
<dbReference type="PharmGKB" id="PA29761"/>
<dbReference type="VEuPathDB" id="HostDB:ENSG00000147255"/>
<dbReference type="eggNOG" id="ENOG502RYEX">
    <property type="taxonomic scope" value="Eukaryota"/>
</dbReference>
<dbReference type="GeneTree" id="ENSGT01130000278334"/>
<dbReference type="HOGENOM" id="CLU_006143_0_0_1"/>
<dbReference type="InParanoid" id="Q8N6C5"/>
<dbReference type="OMA" id="GCGHGCW"/>
<dbReference type="OrthoDB" id="9824921at2759"/>
<dbReference type="PAN-GO" id="Q8N6C5">
    <property type="GO annotations" value="0 GO annotations based on evolutionary models"/>
</dbReference>
<dbReference type="PhylomeDB" id="Q8N6C5"/>
<dbReference type="TreeFam" id="TF336644"/>
<dbReference type="PathwayCommons" id="Q8N6C5"/>
<dbReference type="SignaLink" id="Q8N6C5"/>
<dbReference type="BioGRID-ORCS" id="3547">
    <property type="hits" value="10 hits in 786 CRISPR screens"/>
</dbReference>
<dbReference type="ChiTaRS" id="IGSF1">
    <property type="organism name" value="human"/>
</dbReference>
<dbReference type="GeneWiki" id="IGSF1"/>
<dbReference type="GenomeRNAi" id="3547"/>
<dbReference type="Pharos" id="Q8N6C5">
    <property type="development level" value="Tbio"/>
</dbReference>
<dbReference type="PRO" id="PR:Q8N6C5"/>
<dbReference type="Proteomes" id="UP000005640">
    <property type="component" value="Chromosome X"/>
</dbReference>
<dbReference type="RNAct" id="Q8N6C5">
    <property type="molecule type" value="protein"/>
</dbReference>
<dbReference type="Bgee" id="ENSG00000147255">
    <property type="expression patterns" value="Expressed in pituitary gland and 134 other cell types or tissues"/>
</dbReference>
<dbReference type="ExpressionAtlas" id="Q8N6C5">
    <property type="expression patterns" value="baseline and differential"/>
</dbReference>
<dbReference type="GO" id="GO:0005576">
    <property type="term" value="C:extracellular region"/>
    <property type="evidence" value="ECO:0007669"/>
    <property type="project" value="UniProtKB-SubCell"/>
</dbReference>
<dbReference type="GO" id="GO:0016020">
    <property type="term" value="C:membrane"/>
    <property type="evidence" value="ECO:0000314"/>
    <property type="project" value="UniProtKB"/>
</dbReference>
<dbReference type="GO" id="GO:0038102">
    <property type="term" value="F:activin receptor antagonist activity"/>
    <property type="evidence" value="ECO:0000314"/>
    <property type="project" value="UniProtKB"/>
</dbReference>
<dbReference type="GO" id="GO:0034711">
    <property type="term" value="F:inhibin binding"/>
    <property type="evidence" value="ECO:0000314"/>
    <property type="project" value="UniProtKB"/>
</dbReference>
<dbReference type="GO" id="GO:0002764">
    <property type="term" value="P:immune response-regulating signaling pathway"/>
    <property type="evidence" value="ECO:0000318"/>
    <property type="project" value="GO_Central"/>
</dbReference>
<dbReference type="GO" id="GO:0032926">
    <property type="term" value="P:negative regulation of activin receptor signaling pathway"/>
    <property type="evidence" value="ECO:0000314"/>
    <property type="project" value="UniProtKB"/>
</dbReference>
<dbReference type="GO" id="GO:0006355">
    <property type="term" value="P:regulation of DNA-templated transcription"/>
    <property type="evidence" value="ECO:0000314"/>
    <property type="project" value="UniProtKB"/>
</dbReference>
<dbReference type="FunFam" id="2.60.40.10:FF:000033">
    <property type="entry name" value="Killer cell immunoglobulin-like receptor"/>
    <property type="match status" value="12"/>
</dbReference>
<dbReference type="Gene3D" id="2.60.40.10">
    <property type="entry name" value="Immunoglobulins"/>
    <property type="match status" value="12"/>
</dbReference>
<dbReference type="InterPro" id="IPR007110">
    <property type="entry name" value="Ig-like_dom"/>
</dbReference>
<dbReference type="InterPro" id="IPR036179">
    <property type="entry name" value="Ig-like_dom_sf"/>
</dbReference>
<dbReference type="InterPro" id="IPR013783">
    <property type="entry name" value="Ig-like_fold"/>
</dbReference>
<dbReference type="InterPro" id="IPR050412">
    <property type="entry name" value="Ig-like_Receptors_ImmuneReg"/>
</dbReference>
<dbReference type="InterPro" id="IPR003599">
    <property type="entry name" value="Ig_sub"/>
</dbReference>
<dbReference type="InterPro" id="IPR003598">
    <property type="entry name" value="Ig_sub2"/>
</dbReference>
<dbReference type="PANTHER" id="PTHR11738">
    <property type="entry name" value="MHC CLASS I NK CELL RECEPTOR"/>
    <property type="match status" value="1"/>
</dbReference>
<dbReference type="PANTHER" id="PTHR11738:SF186">
    <property type="entry name" value="OSTEOCLAST-ASSOCIATED IMMUNOGLOBULIN-LIKE RECEPTOR"/>
    <property type="match status" value="1"/>
</dbReference>
<dbReference type="Pfam" id="PF13895">
    <property type="entry name" value="Ig_2"/>
    <property type="match status" value="8"/>
</dbReference>
<dbReference type="SMART" id="SM00409">
    <property type="entry name" value="IG"/>
    <property type="match status" value="11"/>
</dbReference>
<dbReference type="SMART" id="SM00408">
    <property type="entry name" value="IGc2"/>
    <property type="match status" value="9"/>
</dbReference>
<dbReference type="SUPFAM" id="SSF48726">
    <property type="entry name" value="Immunoglobulin"/>
    <property type="match status" value="12"/>
</dbReference>
<dbReference type="PROSITE" id="PS50835">
    <property type="entry name" value="IG_LIKE"/>
    <property type="match status" value="6"/>
</dbReference>
<accession>Q8N6C5</accession>
<accession>B5MEG2</accession>
<accession>H9KV64</accession>
<accession>O15070</accession>
<accession>Q9NTC8</accession>
<name>IGSF1_HUMAN</name>
<feature type="signal peptide" evidence="2">
    <location>
        <begin position="1"/>
        <end position="28"/>
    </location>
</feature>
<feature type="chain" id="PRO_0000318512" description="Immunoglobulin superfamily member 1">
    <location>
        <begin position="29"/>
        <end position="1336"/>
    </location>
</feature>
<feature type="topological domain" description="Extracellular" evidence="2">
    <location>
        <begin position="29"/>
        <end position="518"/>
    </location>
</feature>
<feature type="transmembrane region" description="Helical" evidence="2">
    <location>
        <begin position="519"/>
        <end position="539"/>
    </location>
</feature>
<feature type="topological domain" description="Cytoplasmic" evidence="2">
    <location>
        <begin position="540"/>
        <end position="559"/>
    </location>
</feature>
<feature type="transmembrane region" description="Helical" evidence="2">
    <location>
        <begin position="560"/>
        <end position="580"/>
    </location>
</feature>
<feature type="topological domain" description="Extracellular" evidence="2">
    <location>
        <begin position="581"/>
        <end position="1336"/>
    </location>
</feature>
<feature type="domain" description="Ig-like C2-type 1">
    <location>
        <begin position="38"/>
        <end position="122"/>
    </location>
</feature>
<feature type="domain" description="Ig-like C2-type 2">
    <location>
        <begin position="137"/>
        <end position="222"/>
    </location>
</feature>
<feature type="domain" description="Ig-like C2-type 3">
    <location>
        <begin position="226"/>
        <end position="312"/>
    </location>
</feature>
<feature type="domain" description="Ig-like C2-type 4">
    <location>
        <begin position="321"/>
        <end position="408"/>
    </location>
</feature>
<feature type="domain" description="Ig-like C2-type 5">
    <location>
        <begin position="419"/>
        <end position="500"/>
    </location>
</feature>
<feature type="domain" description="Ig-like C2-type 6">
    <location>
        <begin position="589"/>
        <end position="677"/>
    </location>
</feature>
<feature type="domain" description="Ig-like C2-type 7">
    <location>
        <begin position="686"/>
        <end position="760"/>
    </location>
</feature>
<feature type="domain" description="Ig-like C2-type 8">
    <location>
        <begin position="777"/>
        <end position="869"/>
    </location>
</feature>
<feature type="domain" description="Ig-like C2-type 9">
    <location>
        <begin position="873"/>
        <end position="958"/>
    </location>
</feature>
<feature type="domain" description="Ig-like C2-type 10">
    <location>
        <begin position="965"/>
        <end position="1060"/>
    </location>
</feature>
<feature type="domain" description="Ig-like C2-type 11">
    <location>
        <begin position="1065"/>
        <end position="1150"/>
    </location>
</feature>
<feature type="domain" description="Ig-like C2-type 12">
    <location>
        <begin position="1161"/>
        <end position="1242"/>
    </location>
</feature>
<feature type="region of interest" description="Disordered" evidence="4">
    <location>
        <begin position="1308"/>
        <end position="1336"/>
    </location>
</feature>
<feature type="compositionally biased region" description="Polar residues" evidence="4">
    <location>
        <begin position="1317"/>
        <end position="1328"/>
    </location>
</feature>
<feature type="glycosylation site" description="N-linked (GlcNAc...) asparagine" evidence="2">
    <location>
        <position position="53"/>
    </location>
</feature>
<feature type="glycosylation site" description="N-linked (GlcNAc...) asparagine" evidence="2">
    <location>
        <position position="338"/>
    </location>
</feature>
<feature type="glycosylation site" description="N-linked (GlcNAc...) asparagine" evidence="2">
    <location>
        <position position="374"/>
    </location>
</feature>
<feature type="glycosylation site" description="N-linked (GlcNAc...) asparagine" evidence="2">
    <location>
        <position position="381"/>
    </location>
</feature>
<feature type="glycosylation site" description="N-linked (GlcNAc...) asparagine" evidence="2">
    <location>
        <position position="607"/>
    </location>
</feature>
<feature type="glycosylation site" description="N-linked (GlcNAc...) asparagine" evidence="2">
    <location>
        <position position="747"/>
    </location>
</feature>
<feature type="glycosylation site" description="N-linked (GlcNAc...) asparagine" evidence="2">
    <location>
        <position position="798"/>
    </location>
</feature>
<feature type="glycosylation site" description="N-linked (GlcNAc...) asparagine" evidence="2">
    <location>
        <position position="846"/>
    </location>
</feature>
<feature type="glycosylation site" description="N-linked (GlcNAc...) asparagine" evidence="2">
    <location>
        <position position="939"/>
    </location>
</feature>
<feature type="glycosylation site" description="N-linked (GlcNAc...) asparagine" evidence="2">
    <location>
        <position position="986"/>
    </location>
</feature>
<feature type="glycosylation site" description="N-linked (GlcNAc...) asparagine" evidence="2">
    <location>
        <position position="1027"/>
    </location>
</feature>
<feature type="glycosylation site" description="N-linked (GlcNAc...) asparagine" evidence="2">
    <location>
        <position position="1082"/>
    </location>
</feature>
<feature type="glycosylation site" description="N-linked (GlcNAc...) asparagine" evidence="2">
    <location>
        <position position="1147"/>
    </location>
</feature>
<feature type="glycosylation site" description="N-linked (GlcNAc...) asparagine" evidence="2">
    <location>
        <position position="1223"/>
    </location>
</feature>
<feature type="disulfide bond" evidence="3">
    <location>
        <begin position="58"/>
        <end position="106"/>
    </location>
</feature>
<feature type="disulfide bond" evidence="3">
    <location>
        <begin position="248"/>
        <end position="296"/>
    </location>
</feature>
<feature type="disulfide bond" evidence="3">
    <location>
        <begin position="343"/>
        <end position="392"/>
    </location>
</feature>
<feature type="disulfide bond" evidence="3">
    <location>
        <begin position="441"/>
        <end position="484"/>
    </location>
</feature>
<feature type="disulfide bond" evidence="3">
    <location>
        <begin position="703"/>
        <end position="750"/>
    </location>
</feature>
<feature type="disulfide bond" evidence="3">
    <location>
        <begin position="799"/>
        <end position="849"/>
    </location>
</feature>
<feature type="disulfide bond" evidence="3">
    <location>
        <begin position="895"/>
        <end position="942"/>
    </location>
</feature>
<feature type="disulfide bond" evidence="3">
    <location>
        <begin position="1087"/>
        <end position="1134"/>
    </location>
</feature>
<feature type="disulfide bond" evidence="3">
    <location>
        <begin position="1183"/>
        <end position="1226"/>
    </location>
</feature>
<feature type="splice variant" id="VSP_031195" description="In isoform 2." evidence="12 13">
    <original>RMSLGMTSIV</original>
    <variation>L</variation>
    <location>
        <begin position="24"/>
        <end position="33"/>
    </location>
</feature>
<feature type="splice variant" id="VSP_031196" description="In isoform 3." evidence="11">
    <original>LYPKPTLTAHPGPIMAPGE</original>
    <variation>GCGYGCWHLAIVVPGIMAG</variation>
    <location>
        <begin position="224"/>
        <end position="242"/>
    </location>
</feature>
<feature type="splice variant" id="VSP_031197" description="In isoform 3." evidence="11">
    <location>
        <begin position="243"/>
        <end position="1336"/>
    </location>
</feature>
<feature type="splice variant" id="VSP_044554" description="In isoform 4." evidence="14">
    <original>C</original>
    <variation>CAISFA</variation>
    <location>
        <position position="572"/>
    </location>
</feature>
<feature type="sequence variant" id="VAR_054960" description="In dbSNP:rs6637826.">
    <original>N</original>
    <variation>H</variation>
    <location>
        <position position="381"/>
    </location>
</feature>
<feature type="sequence variant" id="VAR_069268" description="In CHTE; impairs IGSF1 trafficking to the plasma membrane." evidence="9">
    <location>
        <begin position="708"/>
        <end position="716"/>
    </location>
</feature>
<feature type="sequence variant" id="VAR_069269" description="In CHTE; impairs IGSF1 trafficking to the plasma membrane." evidence="9">
    <original>S</original>
    <variation>N</variation>
    <location>
        <position position="765"/>
    </location>
</feature>
<feature type="sequence variant" id="VAR_076256" evidence="8">
    <original>E</original>
    <variation>G</variation>
    <location>
        <position position="774"/>
    </location>
</feature>
<feature type="sequence variant" id="VAR_069270" description="In CHTE; impairs IGSF1 trafficking to the plasma membrane; dbSNP:rs397514622." evidence="9">
    <original>S</original>
    <variation>F</variation>
    <location>
        <position position="858"/>
    </location>
</feature>
<feature type="sequence variant" id="VAR_069271" description="In CHTE; impairs IGSF1 trafficking to the plasma membrane." evidence="9">
    <original>C</original>
    <variation>R</variation>
    <location>
        <position position="942"/>
    </location>
</feature>
<feature type="sequence conflict" description="In Ref. 5; AK226008." evidence="15" ref="5">
    <original>T</original>
    <variation>A</variation>
    <location>
        <position position="397"/>
    </location>
</feature>
<feature type="sequence conflict" description="In Ref. 1; CAA71535." evidence="15" ref="1">
    <original>K</original>
    <variation>R</variation>
    <location>
        <position position="462"/>
    </location>
</feature>
<feature type="sequence conflict" description="In Ref. 1; CAA71535." evidence="15" ref="1">
    <original>I</original>
    <variation>M</variation>
    <location>
        <position position="494"/>
    </location>
</feature>
<feature type="sequence conflict" description="In Ref. 1; CAA71535." evidence="15" ref="1">
    <original>R</original>
    <variation>L</variation>
    <location>
        <position position="757"/>
    </location>
</feature>
<comment type="function">
    <text evidence="1 5">Seems to be a coreceptor in inhibin signaling, but seems not to be a high-affinity inhibin receptor. Antagonizes activin A signaling in the presence or absence of inhibin B (By similarity). Necessary to mediate a specific antagonistic effect of inhibin B on activin-stimulated transcription.</text>
</comment>
<comment type="subunit">
    <text evidence="1 5 7">Interacts with INHA (By similarity). In PubMed:12385827 does not interact with INHA; standard receptor binding assay. Interacts with ACVR1B; the interaction appears to be ligand-dependent as it is diminished by inhibin B and activin A. Interacts with ACVR2A, ACVR2B, ACVRL1 and BMPR1B. Interacts with HECTD1.</text>
</comment>
<comment type="subcellular location">
    <molecule>Isoform 1</molecule>
    <subcellularLocation>
        <location evidence="15">Membrane</location>
        <topology evidence="15">Multi-pass membrane protein</topology>
    </subcellularLocation>
</comment>
<comment type="subcellular location">
    <molecule>Isoform 2</molecule>
    <subcellularLocation>
        <location evidence="15">Membrane</location>
        <topology evidence="15">Multi-pass membrane protein</topology>
    </subcellularLocation>
</comment>
<comment type="subcellular location">
    <molecule>Isoform 3</molecule>
    <subcellularLocation>
        <location evidence="15">Secreted</location>
    </subcellularLocation>
</comment>
<comment type="alternative products">
    <event type="alternative splicing"/>
    <isoform>
        <id>Q8N6C5-1</id>
        <name>1</name>
        <name>InhBP-L</name>
        <name>long</name>
        <sequence type="displayed"/>
    </isoform>
    <isoform>
        <id>Q8N6C5-2</id>
        <name>2</name>
        <sequence type="described" ref="VSP_031195"/>
    </isoform>
    <isoform>
        <id>Q8N6C5-3</id>
        <name>3</name>
        <name>InhBP-S</name>
        <name>short</name>
        <sequence type="described" ref="VSP_031196 VSP_031197"/>
    </isoform>
    <isoform>
        <id>Q8N6C5-4</id>
        <name>4</name>
        <sequence type="described" ref="VSP_044554"/>
    </isoform>
    <text>Additional isoforms seem to exist.</text>
</comment>
<comment type="tissue specificity">
    <text evidence="6 9 10">Highly expressed in pancreas, testis and fetal liver. Moderately expressed in heart, prostate and small intestine. Expressed at very low levels in brain, thymus, ovary, colon, fetal lung and fetal kidney. Expressed in muscle. Isoform 3 is expressed in pituitary gland.</text>
</comment>
<comment type="developmental stage">
    <text evidence="9">Expressed in embryo Carnegie stage 18 in Rathke's pouch progenitors.</text>
</comment>
<comment type="disease" evidence="9">
    <disease id="DI-03629">
        <name>Hypothyroidism, central, and testicular enlargement</name>
        <acronym>CHTE</acronym>
        <description>A disorder characterized by insufficient thyroid gland stimulation by thyroid stimulating hormone (TSH), resulting from hypothalamic and/or pituitary dysfunction. CHTE patients have delayed testosterone increase at puberty with normal testosterone levels in adulthood, normal testicular volume in childhood and enlarged testicles in adulthood.</description>
        <dbReference type="MIM" id="300888"/>
    </disease>
    <text>The disease is caused by variants affecting the gene represented in this entry.</text>
</comment>
<comment type="caution">
    <text evidence="15">It is uncertain whether Met-1 or Met-12 is the initiator.</text>
</comment>
<protein>
    <recommendedName>
        <fullName>Immunoglobulin superfamily member 1</fullName>
        <shortName>IgSF1</shortName>
    </recommendedName>
    <alternativeName>
        <fullName>Immunoglobulin-like domain-containing protein 1</fullName>
    </alternativeName>
    <alternativeName>
        <fullName>Inhibin-binding protein</fullName>
        <shortName>InhBP</shortName>
    </alternativeName>
    <alternativeName>
        <fullName>Pituitary gland-specific factor 2</fullName>
    </alternativeName>
    <alternativeName>
        <fullName>p120</fullName>
    </alternativeName>
</protein>
<keyword id="KW-0025">Alternative splicing</keyword>
<keyword id="KW-0984">Congenital hypothyroidism</keyword>
<keyword id="KW-0225">Disease variant</keyword>
<keyword id="KW-1015">Disulfide bond</keyword>
<keyword id="KW-0325">Glycoprotein</keyword>
<keyword id="KW-0393">Immunoglobulin domain</keyword>
<keyword id="KW-0472">Membrane</keyword>
<keyword id="KW-1267">Proteomics identification</keyword>
<keyword id="KW-0675">Receptor</keyword>
<keyword id="KW-1185">Reference proteome</keyword>
<keyword id="KW-0677">Repeat</keyword>
<keyword id="KW-0964">Secreted</keyword>
<keyword id="KW-0732">Signal</keyword>
<keyword id="KW-0812">Transmembrane</keyword>
<keyword id="KW-1133">Transmembrane helix</keyword>
<organism>
    <name type="scientific">Homo sapiens</name>
    <name type="common">Human</name>
    <dbReference type="NCBI Taxonomy" id="9606"/>
    <lineage>
        <taxon>Eukaryota</taxon>
        <taxon>Metazoa</taxon>
        <taxon>Chordata</taxon>
        <taxon>Craniata</taxon>
        <taxon>Vertebrata</taxon>
        <taxon>Euteleostomi</taxon>
        <taxon>Mammalia</taxon>
        <taxon>Eutheria</taxon>
        <taxon>Euarchontoglires</taxon>
        <taxon>Primates</taxon>
        <taxon>Haplorrhini</taxon>
        <taxon>Catarrhini</taxon>
        <taxon>Hominidae</taxon>
        <taxon>Homo</taxon>
    </lineage>
</organism>